<organism>
    <name type="scientific">Rattus norvegicus</name>
    <name type="common">Rat</name>
    <dbReference type="NCBI Taxonomy" id="10116"/>
    <lineage>
        <taxon>Eukaryota</taxon>
        <taxon>Metazoa</taxon>
        <taxon>Chordata</taxon>
        <taxon>Craniata</taxon>
        <taxon>Vertebrata</taxon>
        <taxon>Euteleostomi</taxon>
        <taxon>Mammalia</taxon>
        <taxon>Eutheria</taxon>
        <taxon>Euarchontoglires</taxon>
        <taxon>Glires</taxon>
        <taxon>Rodentia</taxon>
        <taxon>Myomorpha</taxon>
        <taxon>Muroidea</taxon>
        <taxon>Muridae</taxon>
        <taxon>Murinae</taxon>
        <taxon>Rattus</taxon>
    </lineage>
</organism>
<proteinExistence type="evidence at protein level"/>
<feature type="chain" id="PRO_0000065811" description="von Hippel-Lindau disease tumor suppressor">
    <location>
        <begin position="1"/>
        <end position="185"/>
    </location>
</feature>
<feature type="region of interest" description="Disordered" evidence="3">
    <location>
        <begin position="1"/>
        <end position="29"/>
    </location>
</feature>
<feature type="region of interest" description="Interaction with Elongin BC complex" evidence="1">
    <location>
        <begin position="123"/>
        <end position="132"/>
    </location>
</feature>
<feature type="compositionally biased region" description="Basic and acidic residues" evidence="3">
    <location>
        <begin position="1"/>
        <end position="24"/>
    </location>
</feature>
<gene>
    <name type="primary">Vhl</name>
</gene>
<name>VHL_RAT</name>
<evidence type="ECO:0000250" key="1"/>
<evidence type="ECO:0000250" key="2">
    <source>
        <dbReference type="UniProtKB" id="P40337"/>
    </source>
</evidence>
<evidence type="ECO:0000256" key="3">
    <source>
        <dbReference type="SAM" id="MobiDB-lite"/>
    </source>
</evidence>
<evidence type="ECO:0000269" key="4">
    <source>
    </source>
</evidence>
<evidence type="ECO:0000269" key="5">
    <source>
    </source>
</evidence>
<evidence type="ECO:0000305" key="6"/>
<comment type="function">
    <text evidence="2">Involved in the ubiquitination and subsequent proteasomal degradation via the von Hippel-Lindau ubiquitination complex. Seems to act as a target recruitment subunit in the E3 ubiquitin ligase complex and recruits hydroxylated hypoxia-inducible factor (HIF) under normoxic conditions. Involved in transcriptional repression through interaction with HIF1A, HIF1AN and histone deacetylases. Ubiquitinates, in an oxygen-responsive manner, ADRB2. Acts as a negative regulator of mTORC1 by promoting ubiquitination and degradation of RPTOR.</text>
</comment>
<comment type="pathway">
    <text evidence="2">Protein modification; protein ubiquitination.</text>
</comment>
<comment type="subunit">
    <text evidence="2 4 5">Component of the VBC (VHL-Elongin BC-CUL2) complex; this complex acts as a ubiquitin-ligase E3 and directs proteasome-dependent degradation of targeted proteins. Interacts with CUL2; this interaction is dependent on the integrity of the trimeric VBC complex. Interacts (via the beta domain) with HIF1A (via the NTAD domain); this interaction mediates degradation of HIF1A in normoxia and, in hypoxia, prevents ubiquitination and degradation of HIF1A by mediating hypoxia-induced translocation to the nucleus, a process which requires a hypoxia-dependent regulatory signal. Interacts with ADRB2; the interaction, in normoxia, is dependent on hydroxylation of ADRB2 and the subsequent VCB-mediated ubiquitination and degradation of ADRB2. Under hypoxia, hydroxylation, interaction with VHL, ubiquitination and subsequent degradation of ADRB2 are dramatically decreased. Interacts with RNF139, USP33 and JADE1 (By similarity). Found in a complex composed of LIMD1, VHL, EGLN1/PHD2, ELOB and CUL2. Interacts with LIMD1 (via LIM zinc-binding 2). Interacts with AJUBA (via LIM domains) and WTIP (via LIM domains) (By similarity). Interacts with EPAS1. Interacts with CARD9 (PubMed:17936701). Interacts with DCUN1D1 independently of CUL2; this interaction engages DCUN1D1 in the VCB complex and triggers CUL2 neddylation and consequently cullin ring ligase (CRL) substrates polyubiquitylation (By similarity). Interacts with ALAS1 (hydroxylated form) (By similarity). Interacts with IGFBP1 (PubMed:34531382).</text>
</comment>
<comment type="subcellular location">
    <subcellularLocation>
        <location evidence="2">Cytoplasm</location>
    </subcellularLocation>
    <subcellularLocation>
        <location evidence="2">Cell membrane</location>
        <topology evidence="2">Peripheral membrane protein</topology>
    </subcellularLocation>
    <subcellularLocation>
        <location evidence="2">Endoplasmic reticulum</location>
    </subcellularLocation>
    <subcellularLocation>
        <location evidence="2">Nucleus</location>
    </subcellularLocation>
    <text evidence="2">Found predominantly in the cytoplasm and with less amounts nuclear or membrane-associated. Colocalizes with ADRB2 at the cell membrane.</text>
</comment>
<comment type="domain">
    <text>The Elongin BC complex binding domain is also known as BC-box with the consensus [APST]-L-x(3)-C-x(3)-[AILV].</text>
</comment>
<comment type="similarity">
    <text evidence="6">Belongs to the VHL family.</text>
</comment>
<reference key="1">
    <citation type="journal article" date="1995" name="Proc. Natl. Acad. Sci. U.S.A.">
        <title>Characterization of the VHL tumor suppressor gene product: localization, complex formation, and the effect of natural inactivating mutations.</title>
        <authorList>
            <person name="Duan D.R."/>
            <person name="Humphrey J.S."/>
            <person name="Chen D.Y."/>
            <person name="Weng Y."/>
            <person name="Sukegawa J."/>
            <person name="Lee S."/>
            <person name="Gnarra J.R."/>
            <person name="Linehan W.M."/>
            <person name="Klausner R.D."/>
        </authorList>
    </citation>
    <scope>NUCLEOTIDE SEQUENCE [MRNA]</scope>
</reference>
<reference key="2">
    <citation type="journal article" date="1995" name="Jpn. J. Cancer Res.">
        <title>Cloning of the rat homologue of the von Hippel-Lindau tumor suppressor gene and its non-somatic mutation in rat renal cell carcinomas.</title>
        <authorList>
            <person name="Kikuchi Y."/>
            <person name="Kobayashi E."/>
            <person name="Nishizawa M."/>
            <person name="Hamazaki S."/>
            <person name="Okada S."/>
            <person name="Hino O."/>
        </authorList>
    </citation>
    <scope>NUCLEOTIDE SEQUENCE [MRNA]</scope>
</reference>
<reference key="3">
    <citation type="journal article" date="1996" name="Mol. Carcinog.">
        <title>Renal cell carcinoma development in the rat independent of alterations at the VHL gene locus.</title>
        <authorList>
            <person name="Walker C."/>
            <person name="Ahn Y.T."/>
            <person name="Everitt J."/>
            <person name="Yuan X."/>
        </authorList>
    </citation>
    <scope>NUCLEOTIDE SEQUENCE [MRNA] OF 31-153</scope>
</reference>
<reference key="4">
    <citation type="journal article" date="2007" name="Mol. Cell">
        <title>pVHL acts as an adaptor to promote the inhibitory phosphorylation of the NF-kappaB agonist Card9 by CK2.</title>
        <authorList>
            <person name="Yang H."/>
            <person name="Minamishima Y.A."/>
            <person name="Yan Q."/>
            <person name="Schlisio S."/>
            <person name="Ebert B.L."/>
            <person name="Zhang X."/>
            <person name="Zhang L."/>
            <person name="Kim W.Y."/>
            <person name="Olumi A.F."/>
            <person name="Kaelin W.G. Jr."/>
        </authorList>
    </citation>
    <scope>INTERACTION WITH CARD9</scope>
</reference>
<reference key="5">
    <citation type="journal article" date="2021" name="Cell. Death. Discov.">
        <title>Insulin-like growth factor binding protein-1 regulates HIF-1alpha degradation to inhibit apoptosis in hypoxic cardiomyocytes.</title>
        <authorList>
            <person name="Tang X."/>
            <person name="Jiang H."/>
            <person name="Lin P."/>
            <person name="Zhang Z."/>
            <person name="Chen M."/>
            <person name="Zhang Y."/>
            <person name="Mo J."/>
            <person name="Zhu Y."/>
            <person name="Liu N."/>
            <person name="Chen X."/>
        </authorList>
    </citation>
    <scope>INTERACTION WITH IGFBP1</scope>
</reference>
<accession>Q64259</accession>
<accession>Q64197</accession>
<accession>Q80WY8</accession>
<protein>
    <recommendedName>
        <fullName>von Hippel-Lindau disease tumor suppressor</fullName>
    </recommendedName>
    <alternativeName>
        <fullName>pVHL</fullName>
    </alternativeName>
</protein>
<dbReference type="EMBL" id="U14746">
    <property type="protein sequence ID" value="AAA86874.1"/>
    <property type="molecule type" value="mRNA"/>
</dbReference>
<dbReference type="EMBL" id="S80345">
    <property type="protein sequence ID" value="AAB35675.1"/>
    <property type="molecule type" value="mRNA"/>
</dbReference>
<dbReference type="EMBL" id="S81658">
    <property type="protein sequence ID" value="AAP32238.1"/>
    <property type="molecule type" value="mRNA"/>
</dbReference>
<dbReference type="PIR" id="T10752">
    <property type="entry name" value="T10752"/>
</dbReference>
<dbReference type="RefSeq" id="NP_434688.1">
    <property type="nucleotide sequence ID" value="NM_052801.2"/>
</dbReference>
<dbReference type="SMR" id="Q64259"/>
<dbReference type="BioGRID" id="246987">
    <property type="interactions" value="7"/>
</dbReference>
<dbReference type="CORUM" id="Q64259"/>
<dbReference type="FunCoup" id="Q64259">
    <property type="interactions" value="2554"/>
</dbReference>
<dbReference type="STRING" id="10116.ENSRNOP00000013727"/>
<dbReference type="PhosphoSitePlus" id="Q64259"/>
<dbReference type="PaxDb" id="10116-ENSRNOP00000013727"/>
<dbReference type="Ensembl" id="ENSRNOT00000013727.4">
    <property type="protein sequence ID" value="ENSRNOP00000013727.1"/>
    <property type="gene ID" value="ENSRNOG00000010258.4"/>
</dbReference>
<dbReference type="GeneID" id="24874"/>
<dbReference type="KEGG" id="rno:24874"/>
<dbReference type="UCSC" id="RGD:3960">
    <property type="organism name" value="rat"/>
</dbReference>
<dbReference type="AGR" id="RGD:3960"/>
<dbReference type="CTD" id="7428"/>
<dbReference type="RGD" id="3960">
    <property type="gene designation" value="Vhl"/>
</dbReference>
<dbReference type="eggNOG" id="KOG4710">
    <property type="taxonomic scope" value="Eukaryota"/>
</dbReference>
<dbReference type="GeneTree" id="ENSGT00390000014353"/>
<dbReference type="HOGENOM" id="CLU_116090_0_0_1"/>
<dbReference type="InParanoid" id="Q64259"/>
<dbReference type="OMA" id="MNQRVEQ"/>
<dbReference type="OrthoDB" id="413400at2759"/>
<dbReference type="PhylomeDB" id="Q64259"/>
<dbReference type="TreeFam" id="TF318985"/>
<dbReference type="Reactome" id="R-RNO-1234176">
    <property type="pathway name" value="Oxygen-dependent proline hydroxylation of Hypoxia-inducible Factor Alpha"/>
</dbReference>
<dbReference type="Reactome" id="R-RNO-3232142">
    <property type="pathway name" value="SUMOylation of ubiquitinylation proteins"/>
</dbReference>
<dbReference type="Reactome" id="R-RNO-8951664">
    <property type="pathway name" value="Neddylation"/>
</dbReference>
<dbReference type="Reactome" id="R-RNO-9706019">
    <property type="pathway name" value="RHOBTB3 ATPase cycle"/>
</dbReference>
<dbReference type="Reactome" id="R-RNO-983168">
    <property type="pathway name" value="Antigen processing: Ubiquitination &amp; Proteasome degradation"/>
</dbReference>
<dbReference type="UniPathway" id="UPA00143"/>
<dbReference type="PRO" id="PR:Q64259"/>
<dbReference type="Proteomes" id="UP000002494">
    <property type="component" value="Chromosome 4"/>
</dbReference>
<dbReference type="Bgee" id="ENSRNOG00000010258">
    <property type="expression patterns" value="Expressed in jejunum and 20 other cell types or tissues"/>
</dbReference>
<dbReference type="GO" id="GO:0005929">
    <property type="term" value="C:cilium"/>
    <property type="evidence" value="ECO:0000266"/>
    <property type="project" value="RGD"/>
</dbReference>
<dbReference type="GO" id="GO:0031462">
    <property type="term" value="C:Cul2-RING ubiquitin ligase complex"/>
    <property type="evidence" value="ECO:0000266"/>
    <property type="project" value="RGD"/>
</dbReference>
<dbReference type="GO" id="GO:0005737">
    <property type="term" value="C:cytoplasm"/>
    <property type="evidence" value="ECO:0000266"/>
    <property type="project" value="RGD"/>
</dbReference>
<dbReference type="GO" id="GO:0005783">
    <property type="term" value="C:endoplasmic reticulum"/>
    <property type="evidence" value="ECO:0000250"/>
    <property type="project" value="UniProtKB"/>
</dbReference>
<dbReference type="GO" id="GO:0098978">
    <property type="term" value="C:glutamatergic synapse"/>
    <property type="evidence" value="ECO:0000266"/>
    <property type="project" value="RGD"/>
</dbReference>
<dbReference type="GO" id="GO:0043232">
    <property type="term" value="C:intracellular membraneless organelle"/>
    <property type="evidence" value="ECO:0000266"/>
    <property type="project" value="RGD"/>
</dbReference>
<dbReference type="GO" id="GO:0005730">
    <property type="term" value="C:nucleolus"/>
    <property type="evidence" value="ECO:0000266"/>
    <property type="project" value="RGD"/>
</dbReference>
<dbReference type="GO" id="GO:0005654">
    <property type="term" value="C:nucleoplasm"/>
    <property type="evidence" value="ECO:0000266"/>
    <property type="project" value="RGD"/>
</dbReference>
<dbReference type="GO" id="GO:0005634">
    <property type="term" value="C:nucleus"/>
    <property type="evidence" value="ECO:0000266"/>
    <property type="project" value="RGD"/>
</dbReference>
<dbReference type="GO" id="GO:0005886">
    <property type="term" value="C:plasma membrane"/>
    <property type="evidence" value="ECO:0007669"/>
    <property type="project" value="UniProtKB-SubCell"/>
</dbReference>
<dbReference type="GO" id="GO:0014069">
    <property type="term" value="C:postsynaptic density"/>
    <property type="evidence" value="ECO:0000266"/>
    <property type="project" value="RGD"/>
</dbReference>
<dbReference type="GO" id="GO:0005667">
    <property type="term" value="C:transcription regulator complex"/>
    <property type="evidence" value="ECO:0000304"/>
    <property type="project" value="RGD"/>
</dbReference>
<dbReference type="GO" id="GO:0030891">
    <property type="term" value="C:VCB complex"/>
    <property type="evidence" value="ECO:0000314"/>
    <property type="project" value="RGD"/>
</dbReference>
<dbReference type="GO" id="GO:0140297">
    <property type="term" value="F:DNA-binding transcription factor binding"/>
    <property type="evidence" value="ECO:0000266"/>
    <property type="project" value="RGD"/>
</dbReference>
<dbReference type="GO" id="GO:0019899">
    <property type="term" value="F:enzyme binding"/>
    <property type="evidence" value="ECO:0000266"/>
    <property type="project" value="RGD"/>
</dbReference>
<dbReference type="GO" id="GO:0060090">
    <property type="term" value="F:molecular adaptor activity"/>
    <property type="evidence" value="ECO:0000266"/>
    <property type="project" value="RGD"/>
</dbReference>
<dbReference type="GO" id="GO:0120283">
    <property type="term" value="F:protein serine/threonine kinase binding"/>
    <property type="evidence" value="ECO:0000266"/>
    <property type="project" value="RGD"/>
</dbReference>
<dbReference type="GO" id="GO:0044877">
    <property type="term" value="F:protein-containing complex binding"/>
    <property type="evidence" value="ECO:0000353"/>
    <property type="project" value="RGD"/>
</dbReference>
<dbReference type="GO" id="GO:0003714">
    <property type="term" value="F:transcription corepressor activity"/>
    <property type="evidence" value="ECO:0000266"/>
    <property type="project" value="RGD"/>
</dbReference>
<dbReference type="GO" id="GO:0003711">
    <property type="term" value="F:transcription elongation factor activity"/>
    <property type="evidence" value="ECO:0000266"/>
    <property type="project" value="RGD"/>
</dbReference>
<dbReference type="GO" id="GO:1990756">
    <property type="term" value="F:ubiquitin-like ligase-substrate adaptor activity"/>
    <property type="evidence" value="ECO:0000250"/>
    <property type="project" value="UniProtKB"/>
</dbReference>
<dbReference type="GO" id="GO:1990000">
    <property type="term" value="P:amyloid fibril formation"/>
    <property type="evidence" value="ECO:0000266"/>
    <property type="project" value="RGD"/>
</dbReference>
<dbReference type="GO" id="GO:0001525">
    <property type="term" value="P:angiogenesis"/>
    <property type="evidence" value="ECO:0000266"/>
    <property type="project" value="RGD"/>
</dbReference>
<dbReference type="GO" id="GO:0043534">
    <property type="term" value="P:blood vessel endothelial cell migration"/>
    <property type="evidence" value="ECO:0000266"/>
    <property type="project" value="RGD"/>
</dbReference>
<dbReference type="GO" id="GO:0048593">
    <property type="term" value="P:camera-type eye morphogenesis"/>
    <property type="evidence" value="ECO:0000266"/>
    <property type="project" value="RGD"/>
</dbReference>
<dbReference type="GO" id="GO:0061073">
    <property type="term" value="P:ciliary body morphogenesis"/>
    <property type="evidence" value="ECO:0000266"/>
    <property type="project" value="RGD"/>
</dbReference>
<dbReference type="GO" id="GO:0045446">
    <property type="term" value="P:endothelial cell differentiation"/>
    <property type="evidence" value="ECO:0000266"/>
    <property type="project" value="RGD"/>
</dbReference>
<dbReference type="GO" id="GO:0030198">
    <property type="term" value="P:extracellular matrix organization"/>
    <property type="evidence" value="ECO:0000266"/>
    <property type="project" value="RGD"/>
</dbReference>
<dbReference type="GO" id="GO:0048069">
    <property type="term" value="P:eye pigmentation"/>
    <property type="evidence" value="ECO:0000266"/>
    <property type="project" value="RGD"/>
</dbReference>
<dbReference type="GO" id="GO:0048877">
    <property type="term" value="P:homeostasis of number of retina cells"/>
    <property type="evidence" value="ECO:0000266"/>
    <property type="project" value="RGD"/>
</dbReference>
<dbReference type="GO" id="GO:0097411">
    <property type="term" value="P:hypoxia-inducible factor-1alpha signaling pathway"/>
    <property type="evidence" value="ECO:0000266"/>
    <property type="project" value="RGD"/>
</dbReference>
<dbReference type="GO" id="GO:0061072">
    <property type="term" value="P:iris morphogenesis"/>
    <property type="evidence" value="ECO:0000266"/>
    <property type="project" value="RGD"/>
</dbReference>
<dbReference type="GO" id="GO:0006582">
    <property type="term" value="P:melanin metabolic process"/>
    <property type="evidence" value="ECO:0000266"/>
    <property type="project" value="RGD"/>
</dbReference>
<dbReference type="GO" id="GO:0010507">
    <property type="term" value="P:negative regulation of autophagy"/>
    <property type="evidence" value="ECO:0000266"/>
    <property type="project" value="RGD"/>
</dbReference>
<dbReference type="GO" id="GO:0008285">
    <property type="term" value="P:negative regulation of cell population proliferation"/>
    <property type="evidence" value="ECO:0000266"/>
    <property type="project" value="RGD"/>
</dbReference>
<dbReference type="GO" id="GO:0045602">
    <property type="term" value="P:negative regulation of endothelial cell differentiation"/>
    <property type="evidence" value="ECO:0000266"/>
    <property type="project" value="RGD"/>
</dbReference>
<dbReference type="GO" id="GO:0010629">
    <property type="term" value="P:negative regulation of gene expression"/>
    <property type="evidence" value="ECO:0000266"/>
    <property type="project" value="RGD"/>
</dbReference>
<dbReference type="GO" id="GO:1902072">
    <property type="term" value="P:negative regulation of hypoxia-inducible factor-1alpha signaling pathway"/>
    <property type="evidence" value="ECO:0000266"/>
    <property type="project" value="RGD"/>
</dbReference>
<dbReference type="GO" id="GO:0046426">
    <property type="term" value="P:negative regulation of receptor signaling pathway via JAK-STAT"/>
    <property type="evidence" value="ECO:0000266"/>
    <property type="project" value="RGD"/>
</dbReference>
<dbReference type="GO" id="GO:0009968">
    <property type="term" value="P:negative regulation of signal transduction"/>
    <property type="evidence" value="ECO:0000266"/>
    <property type="project" value="RGD"/>
</dbReference>
<dbReference type="GO" id="GO:0070244">
    <property type="term" value="P:negative regulation of thymocyte apoptotic process"/>
    <property type="evidence" value="ECO:0000266"/>
    <property type="project" value="RGD"/>
</dbReference>
<dbReference type="GO" id="GO:1904262">
    <property type="term" value="P:negative regulation of TORC1 signaling"/>
    <property type="evidence" value="ECO:0000250"/>
    <property type="project" value="UniProtKB"/>
</dbReference>
<dbReference type="GO" id="GO:0000122">
    <property type="term" value="P:negative regulation of transcription by RNA polymerase II"/>
    <property type="evidence" value="ECO:0000315"/>
    <property type="project" value="RGD"/>
</dbReference>
<dbReference type="GO" id="GO:0034244">
    <property type="term" value="P:negative regulation of transcription elongation by RNA polymerase II"/>
    <property type="evidence" value="ECO:0000266"/>
    <property type="project" value="RGD"/>
</dbReference>
<dbReference type="GO" id="GO:0030182">
    <property type="term" value="P:neuron differentiation"/>
    <property type="evidence" value="ECO:0000314"/>
    <property type="project" value="RGD"/>
</dbReference>
<dbReference type="GO" id="GO:0003310">
    <property type="term" value="P:pancreatic A cell differentiation"/>
    <property type="evidence" value="ECO:0000266"/>
    <property type="project" value="RGD"/>
</dbReference>
<dbReference type="GO" id="GO:0045893">
    <property type="term" value="P:positive regulation of DNA-templated transcription"/>
    <property type="evidence" value="ECO:0000266"/>
    <property type="project" value="RGD"/>
</dbReference>
<dbReference type="GO" id="GO:0050679">
    <property type="term" value="P:positive regulation of epithelial cell proliferation"/>
    <property type="evidence" value="ECO:0000266"/>
    <property type="project" value="RGD"/>
</dbReference>
<dbReference type="GO" id="GO:0010498">
    <property type="term" value="P:proteasomal protein catabolic process"/>
    <property type="evidence" value="ECO:0000266"/>
    <property type="project" value="RGD"/>
</dbReference>
<dbReference type="GO" id="GO:0043161">
    <property type="term" value="P:proteasome-mediated ubiquitin-dependent protein catabolic process"/>
    <property type="evidence" value="ECO:0000250"/>
    <property type="project" value="UniProtKB"/>
</dbReference>
<dbReference type="GO" id="GO:0030163">
    <property type="term" value="P:protein catabolic process"/>
    <property type="evidence" value="ECO:0000266"/>
    <property type="project" value="RGD"/>
</dbReference>
<dbReference type="GO" id="GO:0015031">
    <property type="term" value="P:protein transport"/>
    <property type="evidence" value="ECO:0000266"/>
    <property type="project" value="RGD"/>
</dbReference>
<dbReference type="GO" id="GO:0016567">
    <property type="term" value="P:protein ubiquitination"/>
    <property type="evidence" value="ECO:0000266"/>
    <property type="project" value="RGD"/>
</dbReference>
<dbReference type="GO" id="GO:2001233">
    <property type="term" value="P:regulation of apoptotic signaling pathway"/>
    <property type="evidence" value="ECO:0000266"/>
    <property type="project" value="RGD"/>
</dbReference>
<dbReference type="GO" id="GO:0042069">
    <property type="term" value="P:regulation of catecholamine metabolic process"/>
    <property type="evidence" value="ECO:0000315"/>
    <property type="project" value="RGD"/>
</dbReference>
<dbReference type="GO" id="GO:1900037">
    <property type="term" value="P:regulation of cellular response to hypoxia"/>
    <property type="evidence" value="ECO:0000266"/>
    <property type="project" value="RGD"/>
</dbReference>
<dbReference type="GO" id="GO:0006355">
    <property type="term" value="P:regulation of DNA-templated transcription"/>
    <property type="evidence" value="ECO:0000314"/>
    <property type="project" value="RGD"/>
</dbReference>
<dbReference type="GO" id="GO:0010468">
    <property type="term" value="P:regulation of gene expression"/>
    <property type="evidence" value="ECO:0000266"/>
    <property type="project" value="RGD"/>
</dbReference>
<dbReference type="GO" id="GO:0099175">
    <property type="term" value="P:regulation of postsynapse organization"/>
    <property type="evidence" value="ECO:0000266"/>
    <property type="project" value="RGD"/>
</dbReference>
<dbReference type="GO" id="GO:0032880">
    <property type="term" value="P:regulation of protein localization"/>
    <property type="evidence" value="ECO:0000266"/>
    <property type="project" value="RGD"/>
</dbReference>
<dbReference type="GO" id="GO:0070243">
    <property type="term" value="P:regulation of thymocyte apoptotic process"/>
    <property type="evidence" value="ECO:0000266"/>
    <property type="project" value="RGD"/>
</dbReference>
<dbReference type="GO" id="GO:0140252">
    <property type="term" value="P:regulation protein catabolic process at postsynapse"/>
    <property type="evidence" value="ECO:0000266"/>
    <property type="project" value="RGD"/>
</dbReference>
<dbReference type="GO" id="GO:0045471">
    <property type="term" value="P:response to ethanol"/>
    <property type="evidence" value="ECO:0000270"/>
    <property type="project" value="RGD"/>
</dbReference>
<dbReference type="GO" id="GO:0001666">
    <property type="term" value="P:response to hypoxia"/>
    <property type="evidence" value="ECO:0000315"/>
    <property type="project" value="RGD"/>
</dbReference>
<dbReference type="GO" id="GO:0003309">
    <property type="term" value="P:type B pancreatic cell differentiation"/>
    <property type="evidence" value="ECO:0000266"/>
    <property type="project" value="RGD"/>
</dbReference>
<dbReference type="CDD" id="cd05468">
    <property type="entry name" value="pVHL"/>
    <property type="match status" value="1"/>
</dbReference>
<dbReference type="FunFam" id="1.10.750.10:FF:000001">
    <property type="entry name" value="von Hippel-Lindau disease tumor suppressor"/>
    <property type="match status" value="1"/>
</dbReference>
<dbReference type="FunFam" id="2.60.40.780:FF:000001">
    <property type="entry name" value="von Hippel-Lindau disease tumor suppressor"/>
    <property type="match status" value="1"/>
</dbReference>
<dbReference type="Gene3D" id="1.10.750.10">
    <property type="entry name" value="von Hippel-Lindau disease tumour suppressor, alpha domain"/>
    <property type="match status" value="1"/>
</dbReference>
<dbReference type="Gene3D" id="2.60.40.780">
    <property type="entry name" value="von Hippel-Lindau disease tumour suppressor, beta domain"/>
    <property type="match status" value="1"/>
</dbReference>
<dbReference type="InterPro" id="IPR024048">
    <property type="entry name" value="VHL_alpha_dom"/>
</dbReference>
<dbReference type="InterPro" id="IPR037139">
    <property type="entry name" value="VHL_alpha_dom_sf"/>
</dbReference>
<dbReference type="InterPro" id="IPR024053">
    <property type="entry name" value="VHL_beta_dom"/>
</dbReference>
<dbReference type="InterPro" id="IPR037140">
    <property type="entry name" value="VHL_beta_dom_sf"/>
</dbReference>
<dbReference type="InterPro" id="IPR036208">
    <property type="entry name" value="VHL_sf"/>
</dbReference>
<dbReference type="InterPro" id="IPR022772">
    <property type="entry name" value="VHL_tumour_suppress_b/a_dom"/>
</dbReference>
<dbReference type="Pfam" id="PF01847">
    <property type="entry name" value="VHL"/>
    <property type="match status" value="1"/>
</dbReference>
<dbReference type="Pfam" id="PF17211">
    <property type="entry name" value="VHL_C"/>
    <property type="match status" value="1"/>
</dbReference>
<dbReference type="SUPFAM" id="SSF49468">
    <property type="entry name" value="VHL"/>
    <property type="match status" value="1"/>
</dbReference>
<sequence length="185" mass="21215">MPRKAASPEEAERMPGSEEIEAGRPRPVLRSVNSREPSQVIFCNRSPRVVLPLWLNFDGEPQPYPTLPPGTGRRIHSYRGHLWLFRDAGTHDGLLVNQTELFVPSLNVDGQPIFANITLPVYTLKERCLQVVRSLVKPENYRRLDIVRSLYEDLEDHPNVRKDIQRLTQEHLENQALGEEPEGVH</sequence>
<keyword id="KW-1003">Cell membrane</keyword>
<keyword id="KW-0963">Cytoplasm</keyword>
<keyword id="KW-0256">Endoplasmic reticulum</keyword>
<keyword id="KW-0472">Membrane</keyword>
<keyword id="KW-0539">Nucleus</keyword>
<keyword id="KW-1185">Reference proteome</keyword>
<keyword id="KW-0043">Tumor suppressor</keyword>
<keyword id="KW-0833">Ubl conjugation pathway</keyword>